<comment type="catalytic activity">
    <reaction>
        <text>ATP + H2O + phospholipidSide 1 = ADP + phosphate + phospholipidSide 2.</text>
        <dbReference type="EC" id="7.6.2.1"/>
    </reaction>
</comment>
<comment type="cofactor">
    <cofactor evidence="4">
        <name>Mg(2+)</name>
        <dbReference type="ChEBI" id="CHEBI:18420"/>
    </cofactor>
</comment>
<comment type="subcellular location">
    <subcellularLocation>
        <location evidence="1">Golgi apparatus</location>
        <location evidence="1">trans-Golgi network membrane</location>
        <topology evidence="1">Multi-pass membrane protein</topology>
    </subcellularLocation>
</comment>
<comment type="alternative products">
    <event type="alternative splicing"/>
    <isoform>
        <id>P98195-1</id>
        <name>1</name>
        <sequence type="displayed"/>
    </isoform>
    <isoform>
        <id>P98195-2</id>
        <name>2</name>
        <sequence type="described" ref="VSP_035908"/>
    </isoform>
</comment>
<comment type="tissue specificity">
    <text>Found in most tissues except spleen and muscle. Most abundant in testis. Also detected in fetal tissues.</text>
</comment>
<comment type="similarity">
    <text evidence="10">Belongs to the cation transport ATPase (P-type) (TC 3.A.3) family. Type IV subfamily.</text>
</comment>
<keyword id="KW-0025">Alternative splicing</keyword>
<keyword id="KW-0067">ATP-binding</keyword>
<keyword id="KW-0333">Golgi apparatus</keyword>
<keyword id="KW-0445">Lipid transport</keyword>
<keyword id="KW-0460">Magnesium</keyword>
<keyword id="KW-0472">Membrane</keyword>
<keyword id="KW-0479">Metal-binding</keyword>
<keyword id="KW-0547">Nucleotide-binding</keyword>
<keyword id="KW-1185">Reference proteome</keyword>
<keyword id="KW-1278">Translocase</keyword>
<keyword id="KW-0812">Transmembrane</keyword>
<keyword id="KW-1133">Transmembrane helix</keyword>
<keyword id="KW-0813">Transport</keyword>
<evidence type="ECO:0000250" key="1"/>
<evidence type="ECO:0000250" key="2">
    <source>
        <dbReference type="UniProtKB" id="P04191"/>
    </source>
</evidence>
<evidence type="ECO:0000250" key="3">
    <source>
        <dbReference type="UniProtKB" id="P39524"/>
    </source>
</evidence>
<evidence type="ECO:0000250" key="4">
    <source>
        <dbReference type="UniProtKB" id="P40527"/>
    </source>
</evidence>
<evidence type="ECO:0000250" key="5">
    <source>
        <dbReference type="UniProtKB" id="Q8NB49"/>
    </source>
</evidence>
<evidence type="ECO:0000250" key="6">
    <source>
        <dbReference type="UniProtKB" id="Q9Y2Q0"/>
    </source>
</evidence>
<evidence type="ECO:0000255" key="7"/>
<evidence type="ECO:0000256" key="8">
    <source>
        <dbReference type="SAM" id="MobiDB-lite"/>
    </source>
</evidence>
<evidence type="ECO:0000303" key="9">
    <source>
    </source>
</evidence>
<evidence type="ECO:0000305" key="10"/>
<name>ATP9B_MOUSE</name>
<gene>
    <name type="primary">Atp9b</name>
</gene>
<dbReference type="EC" id="7.6.2.1"/>
<dbReference type="EMBL" id="BC003246">
    <property type="protein sequence ID" value="AAH03246.1"/>
    <property type="molecule type" value="mRNA"/>
</dbReference>
<dbReference type="EMBL" id="BC079626">
    <property type="protein sequence ID" value="AAH79626.1"/>
    <property type="molecule type" value="mRNA"/>
</dbReference>
<dbReference type="EMBL" id="AF155913">
    <property type="protein sequence ID" value="AAF08476.1"/>
    <property type="molecule type" value="mRNA"/>
</dbReference>
<dbReference type="CCDS" id="CCDS29370.1">
    <molecule id="P98195-2"/>
</dbReference>
<dbReference type="CCDS" id="CCDS89288.1">
    <molecule id="P98195-1"/>
</dbReference>
<dbReference type="RefSeq" id="NP_001188498.1">
    <property type="nucleotide sequence ID" value="NM_001201569.1"/>
</dbReference>
<dbReference type="RefSeq" id="NP_056620.2">
    <property type="nucleotide sequence ID" value="NM_015805.3"/>
</dbReference>
<dbReference type="SMR" id="P98195"/>
<dbReference type="BioGRID" id="206103">
    <property type="interactions" value="1"/>
</dbReference>
<dbReference type="FunCoup" id="P98195">
    <property type="interactions" value="3522"/>
</dbReference>
<dbReference type="STRING" id="10090.ENSMUSP00000153157"/>
<dbReference type="GlyGen" id="P98195">
    <property type="glycosylation" value="1 site, 1 N-linked glycan (1 site)"/>
</dbReference>
<dbReference type="iPTMnet" id="P98195"/>
<dbReference type="PhosphoSitePlus" id="P98195"/>
<dbReference type="SwissPalm" id="P98195"/>
<dbReference type="PaxDb" id="10090-ENSMUSP00000089394"/>
<dbReference type="ProteomicsDB" id="277133">
    <molecule id="P98195-1"/>
</dbReference>
<dbReference type="ProteomicsDB" id="277134">
    <molecule id="P98195-2"/>
</dbReference>
<dbReference type="Pumba" id="P98195"/>
<dbReference type="DNASU" id="50771"/>
<dbReference type="GeneID" id="50771"/>
<dbReference type="KEGG" id="mmu:50771"/>
<dbReference type="UCSC" id="uc008fti.2">
    <molecule id="P98195-1"/>
    <property type="organism name" value="mouse"/>
</dbReference>
<dbReference type="AGR" id="MGI:1354757"/>
<dbReference type="CTD" id="374868"/>
<dbReference type="MGI" id="MGI:1354757">
    <property type="gene designation" value="Atp9b"/>
</dbReference>
<dbReference type="eggNOG" id="KOG0210">
    <property type="taxonomic scope" value="Eukaryota"/>
</dbReference>
<dbReference type="InParanoid" id="P98195"/>
<dbReference type="OrthoDB" id="377733at2759"/>
<dbReference type="PhylomeDB" id="P98195"/>
<dbReference type="Reactome" id="R-MMU-936837">
    <property type="pathway name" value="Ion transport by P-type ATPases"/>
</dbReference>
<dbReference type="BioGRID-ORCS" id="50771">
    <property type="hits" value="5 hits in 78 CRISPR screens"/>
</dbReference>
<dbReference type="ChiTaRS" id="Atp9b">
    <property type="organism name" value="mouse"/>
</dbReference>
<dbReference type="PRO" id="PR:P98195"/>
<dbReference type="Proteomes" id="UP000000589">
    <property type="component" value="Unplaced"/>
</dbReference>
<dbReference type="RNAct" id="P98195">
    <property type="molecule type" value="protein"/>
</dbReference>
<dbReference type="GO" id="GO:0005794">
    <property type="term" value="C:Golgi apparatus"/>
    <property type="evidence" value="ECO:0007669"/>
    <property type="project" value="UniProtKB-SubCell"/>
</dbReference>
<dbReference type="GO" id="GO:0016020">
    <property type="term" value="C:membrane"/>
    <property type="evidence" value="ECO:0007669"/>
    <property type="project" value="UniProtKB-KW"/>
</dbReference>
<dbReference type="GO" id="GO:0005524">
    <property type="term" value="F:ATP binding"/>
    <property type="evidence" value="ECO:0007669"/>
    <property type="project" value="UniProtKB-KW"/>
</dbReference>
<dbReference type="GO" id="GO:0016887">
    <property type="term" value="F:ATP hydrolysis activity"/>
    <property type="evidence" value="ECO:0007669"/>
    <property type="project" value="InterPro"/>
</dbReference>
<dbReference type="GO" id="GO:0140326">
    <property type="term" value="F:ATPase-coupled intramembrane lipid transporter activity"/>
    <property type="evidence" value="ECO:0007669"/>
    <property type="project" value="UniProtKB-EC"/>
</dbReference>
<dbReference type="GO" id="GO:0000287">
    <property type="term" value="F:magnesium ion binding"/>
    <property type="evidence" value="ECO:0007669"/>
    <property type="project" value="InterPro"/>
</dbReference>
<dbReference type="GO" id="GO:0015914">
    <property type="term" value="P:phospholipid transport"/>
    <property type="evidence" value="ECO:0007669"/>
    <property type="project" value="InterPro"/>
</dbReference>
<dbReference type="CDD" id="cd07541">
    <property type="entry name" value="P-type_ATPase_APLT_Neo1-like"/>
    <property type="match status" value="1"/>
</dbReference>
<dbReference type="FunFam" id="3.40.1110.10:FF:000008">
    <property type="entry name" value="Phospholipid-transporting ATPase"/>
    <property type="match status" value="1"/>
</dbReference>
<dbReference type="FunFam" id="3.40.50.1000:FF:000009">
    <property type="entry name" value="Phospholipid-transporting ATPase"/>
    <property type="match status" value="1"/>
</dbReference>
<dbReference type="Gene3D" id="3.40.1110.10">
    <property type="entry name" value="Calcium-transporting ATPase, cytoplasmic domain N"/>
    <property type="match status" value="1"/>
</dbReference>
<dbReference type="Gene3D" id="2.70.150.10">
    <property type="entry name" value="Calcium-transporting ATPase, cytoplasmic transduction domain A"/>
    <property type="match status" value="1"/>
</dbReference>
<dbReference type="Gene3D" id="3.40.50.1000">
    <property type="entry name" value="HAD superfamily/HAD-like"/>
    <property type="match status" value="1"/>
</dbReference>
<dbReference type="InterPro" id="IPR023299">
    <property type="entry name" value="ATPase_P-typ_cyto_dom_N"/>
</dbReference>
<dbReference type="InterPro" id="IPR018303">
    <property type="entry name" value="ATPase_P-typ_P_site"/>
</dbReference>
<dbReference type="InterPro" id="IPR023298">
    <property type="entry name" value="ATPase_P-typ_TM_dom_sf"/>
</dbReference>
<dbReference type="InterPro" id="IPR008250">
    <property type="entry name" value="ATPase_P-typ_transduc_dom_A_sf"/>
</dbReference>
<dbReference type="InterPro" id="IPR036412">
    <property type="entry name" value="HAD-like_sf"/>
</dbReference>
<dbReference type="InterPro" id="IPR023214">
    <property type="entry name" value="HAD_sf"/>
</dbReference>
<dbReference type="InterPro" id="IPR006539">
    <property type="entry name" value="P-type_ATPase_IV"/>
</dbReference>
<dbReference type="InterPro" id="IPR032631">
    <property type="entry name" value="P-type_ATPase_N"/>
</dbReference>
<dbReference type="InterPro" id="IPR001757">
    <property type="entry name" value="P_typ_ATPase"/>
</dbReference>
<dbReference type="InterPro" id="IPR032630">
    <property type="entry name" value="P_typ_ATPase_c"/>
</dbReference>
<dbReference type="InterPro" id="IPR044492">
    <property type="entry name" value="P_typ_ATPase_HD_dom"/>
</dbReference>
<dbReference type="NCBIfam" id="TIGR01652">
    <property type="entry name" value="ATPase-Plipid"/>
    <property type="match status" value="1"/>
</dbReference>
<dbReference type="NCBIfam" id="TIGR01494">
    <property type="entry name" value="ATPase_P-type"/>
    <property type="match status" value="3"/>
</dbReference>
<dbReference type="PANTHER" id="PTHR24092:SF50">
    <property type="entry name" value="PHOSPHOLIPID-TRANSPORTING ATPASE IIB-RELATED"/>
    <property type="match status" value="1"/>
</dbReference>
<dbReference type="PANTHER" id="PTHR24092">
    <property type="entry name" value="PROBABLE PHOSPHOLIPID-TRANSPORTING ATPASE"/>
    <property type="match status" value="1"/>
</dbReference>
<dbReference type="Pfam" id="PF13246">
    <property type="entry name" value="Cation_ATPase"/>
    <property type="match status" value="1"/>
</dbReference>
<dbReference type="Pfam" id="PF00122">
    <property type="entry name" value="E1-E2_ATPase"/>
    <property type="match status" value="1"/>
</dbReference>
<dbReference type="Pfam" id="PF00702">
    <property type="entry name" value="Hydrolase"/>
    <property type="match status" value="1"/>
</dbReference>
<dbReference type="Pfam" id="PF16212">
    <property type="entry name" value="PhoLip_ATPase_C"/>
    <property type="match status" value="1"/>
</dbReference>
<dbReference type="Pfam" id="PF16209">
    <property type="entry name" value="PhoLip_ATPase_N"/>
    <property type="match status" value="1"/>
</dbReference>
<dbReference type="PRINTS" id="PR00119">
    <property type="entry name" value="CATATPASE"/>
</dbReference>
<dbReference type="SFLD" id="SFLDG00002">
    <property type="entry name" value="C1.7:_P-type_atpase_like"/>
    <property type="match status" value="1"/>
</dbReference>
<dbReference type="SFLD" id="SFLDF00027">
    <property type="entry name" value="p-type_atpase"/>
    <property type="match status" value="1"/>
</dbReference>
<dbReference type="SUPFAM" id="SSF81653">
    <property type="entry name" value="Calcium ATPase, transduction domain A"/>
    <property type="match status" value="1"/>
</dbReference>
<dbReference type="SUPFAM" id="SSF81665">
    <property type="entry name" value="Calcium ATPase, transmembrane domain M"/>
    <property type="match status" value="1"/>
</dbReference>
<dbReference type="SUPFAM" id="SSF56784">
    <property type="entry name" value="HAD-like"/>
    <property type="match status" value="1"/>
</dbReference>
<dbReference type="SUPFAM" id="SSF81660">
    <property type="entry name" value="Metal cation-transporting ATPase, ATP-binding domain N"/>
    <property type="match status" value="1"/>
</dbReference>
<dbReference type="PROSITE" id="PS00154">
    <property type="entry name" value="ATPASE_E1_E2"/>
    <property type="match status" value="1"/>
</dbReference>
<accession>P98195</accession>
<accession>Q68FM3</accession>
<accession>Q99LI3</accession>
<sequence length="1146" mass="129017">MADQIPLYPVRSAGAAASHRRAAYYSSAGPGPGADRRGRYQLEDESAHLDEMPLMMSEEGFENDESDYHTLPRARITRRKRGLEWFVCGGWKFLCTSCCDWLINVCQRKKELKARTVWLGCPEKCEEKHPRNSIKNQKYNVFTFIPGVLYEQFKFFLNLYFLVVSCSQFVPALKIGYLYTYWAPLGFVLAVTIAREAIDEFRRFQRDKEMNSQLYSKLTVRGKVQVKSSDIQVGDLIIVEKNQRIPSDMVFLRTSEKAGSCFIRTDQLDGETDWKLKVAVSCTQRLPALGDLFSISAYVYAQKPQLDIHSFEGTFTREDSDPPIHESLSIENTLWASTIVASGTVIGVVIYTGKETRSVMNTSNPNNKVGLLDLELNQLTKALFLALVVLSVVMVTLQGFAGPWYRNLFRFLLLFSYIIPISLRVNLDMGKAAYGWMIMKDENIPGTVVRTSTIPEELGRLVYLLTDKTGTLTQNEMVFKRLHLGTVSYGTDTMDEIQSHVLNSYLQVHSQPSGHNPSSAPLRRSQSSTPKVKKSVSSRIHEAVKAIALCHNVTPVYEARAGITGETEFAEADQDFSDENRTYQASSPDEVALVRWTESVGLTLVSRDLASMQLKTPSGQVLTYCILQMFPFTSESKRMGIIVRDESTAEITFYMKGADVAMSTIVQYNDWLEEECGNMAREGLRTLVVAKRTLTEEQYQDFESRYSQAKLSIHDRALKVAAVVESLEREMELLCLTGVEDQLQADVRPTLEMLRNAGIKIWMLTGDKLETATCIAKSSHLVSRTQDIHVFRPVTSRGEAHLELNAFRRKHDCALVISGDSLEVCLRYYEHELVELACQCPAVVCCRCSPTQKAHIVTLLRQHTRKRTCAIGDGGNDVSMIQAADCGIGIEGKEGKQASLAADFSITQFRHIGRLLMVHGRNSYKRSAALGQFVMHRGLIISTMQAVFSSVFYFASVPLYQGFLMVGYATIYTMFPVFSLVLDQDVKPEMAILYPELYKDLTKGRSLSFKTFLIWVLISIYQGGILMYGALLLFEDEFVHVVAISFTALILTELLMVALTIRTWHWLMVVAEFLSLGCYVASLAFLNEYFGIGRVSFGAFLDVAFITTVTFLWKVSAITVVSCLPLYVLKYLKRKLSPPSYSKLSS</sequence>
<organism>
    <name type="scientific">Mus musculus</name>
    <name type="common">Mouse</name>
    <dbReference type="NCBI Taxonomy" id="10090"/>
    <lineage>
        <taxon>Eukaryota</taxon>
        <taxon>Metazoa</taxon>
        <taxon>Chordata</taxon>
        <taxon>Craniata</taxon>
        <taxon>Vertebrata</taxon>
        <taxon>Euteleostomi</taxon>
        <taxon>Mammalia</taxon>
        <taxon>Eutheria</taxon>
        <taxon>Euarchontoglires</taxon>
        <taxon>Glires</taxon>
        <taxon>Rodentia</taxon>
        <taxon>Myomorpha</taxon>
        <taxon>Muroidea</taxon>
        <taxon>Muridae</taxon>
        <taxon>Murinae</taxon>
        <taxon>Mus</taxon>
        <taxon>Mus</taxon>
    </lineage>
</organism>
<reference key="1">
    <citation type="journal article" date="2004" name="Genome Res.">
        <title>The status, quality, and expansion of the NIH full-length cDNA project: the Mammalian Gene Collection (MGC).</title>
        <authorList>
            <consortium name="The MGC Project Team"/>
        </authorList>
    </citation>
    <scope>NUCLEOTIDE SEQUENCE [LARGE SCALE MRNA] (ISOFORM 1)</scope>
    <scope>NUCLEOTIDE SEQUENCE [LARGE SCALE MRNA] OF 709-1146 (ISOFORM 2)</scope>
    <source>
        <strain>C57BL/6J</strain>
        <tissue>Brain</tissue>
    </source>
</reference>
<reference key="2">
    <citation type="journal article" date="1999" name="Physiol. Genomics">
        <title>Differential expression of putative transbilayer amphipath transporters.</title>
        <authorList>
            <person name="Halleck M.S."/>
            <person name="Lawler J.F. Jr."/>
            <person name="Blackshaw S."/>
            <person name="Gao L."/>
            <person name="Nagarajan P."/>
            <person name="Hacker C."/>
            <person name="Pyle S."/>
            <person name="Newman J.T."/>
            <person name="Nakanishi Y."/>
            <person name="Ando H."/>
            <person name="Weinstock D."/>
            <person name="Williamson P.L."/>
            <person name="Schlegel R.A."/>
        </authorList>
    </citation>
    <scope>NUCLEOTIDE SEQUENCE [MRNA] OF 52-1095 (ISOFORM 1)</scope>
    <source>
        <strain>ICR</strain>
        <tissue>Brain</tissue>
    </source>
</reference>
<reference key="3">
    <citation type="journal article" date="2010" name="Cell">
        <title>A tissue-specific atlas of mouse protein phosphorylation and expression.</title>
        <authorList>
            <person name="Huttlin E.L."/>
            <person name="Jedrychowski M.P."/>
            <person name="Elias J.E."/>
            <person name="Goswami T."/>
            <person name="Rad R."/>
            <person name="Beausoleil S.A."/>
            <person name="Villen J."/>
            <person name="Haas W."/>
            <person name="Sowa M.E."/>
            <person name="Gygi S.P."/>
        </authorList>
    </citation>
    <scope>IDENTIFICATION BY MASS SPECTROMETRY [LARGE SCALE ANALYSIS]</scope>
    <source>
        <tissue>Liver</tissue>
    </source>
</reference>
<feature type="chain" id="PRO_0000046378" description="Probable phospholipid-transporting ATPase IIB">
    <location>
        <begin position="1"/>
        <end position="1146"/>
    </location>
</feature>
<feature type="topological domain" description="Cytoplasmic" evidence="7">
    <location>
        <begin position="1"/>
        <end position="143"/>
    </location>
</feature>
<feature type="transmembrane region" description="Helical" evidence="7">
    <location>
        <begin position="144"/>
        <end position="164"/>
    </location>
</feature>
<feature type="topological domain" description="Extracellular" evidence="7">
    <location>
        <begin position="165"/>
        <end position="172"/>
    </location>
</feature>
<feature type="transmembrane region" description="Helical" evidence="7">
    <location>
        <begin position="173"/>
        <end position="193"/>
    </location>
</feature>
<feature type="topological domain" description="Cytoplasmic" evidence="7">
    <location>
        <begin position="194"/>
        <end position="381"/>
    </location>
</feature>
<feature type="transmembrane region" description="Helical" evidence="7">
    <location>
        <begin position="382"/>
        <end position="402"/>
    </location>
</feature>
<feature type="topological domain" description="Extracellular" evidence="7">
    <location>
        <begin position="403"/>
        <end position="407"/>
    </location>
</feature>
<feature type="transmembrane region" description="Helical" evidence="7">
    <location>
        <begin position="408"/>
        <end position="427"/>
    </location>
</feature>
<feature type="topological domain" description="Cytoplasmic" evidence="7">
    <location>
        <begin position="428"/>
        <end position="938"/>
    </location>
</feature>
<feature type="transmembrane region" description="Helical" evidence="7">
    <location>
        <begin position="939"/>
        <end position="959"/>
    </location>
</feature>
<feature type="topological domain" description="Extracellular" evidence="7">
    <location>
        <begin position="960"/>
        <end position="961"/>
    </location>
</feature>
<feature type="transmembrane region" description="Helical" evidence="7">
    <location>
        <begin position="962"/>
        <end position="982"/>
    </location>
</feature>
<feature type="topological domain" description="Cytoplasmic" evidence="7">
    <location>
        <begin position="983"/>
        <end position="1011"/>
    </location>
</feature>
<feature type="transmembrane region" description="Helical" evidence="7">
    <location>
        <begin position="1012"/>
        <end position="1032"/>
    </location>
</feature>
<feature type="topological domain" description="Extracellular" evidence="7">
    <location>
        <begin position="1033"/>
        <end position="1040"/>
    </location>
</feature>
<feature type="transmembrane region" description="Helical" evidence="7">
    <location>
        <begin position="1041"/>
        <end position="1061"/>
    </location>
</feature>
<feature type="topological domain" description="Cytoplasmic" evidence="7">
    <location>
        <begin position="1062"/>
        <end position="1065"/>
    </location>
</feature>
<feature type="transmembrane region" description="Helical" evidence="7">
    <location>
        <begin position="1066"/>
        <end position="1086"/>
    </location>
</feature>
<feature type="topological domain" description="Extracellular" evidence="7">
    <location>
        <begin position="1087"/>
        <end position="1105"/>
    </location>
</feature>
<feature type="transmembrane region" description="Helical" evidence="7">
    <location>
        <begin position="1106"/>
        <end position="1128"/>
    </location>
</feature>
<feature type="topological domain" description="Cytoplasmic" evidence="7">
    <location>
        <begin position="1129"/>
        <end position="1146"/>
    </location>
</feature>
<feature type="region of interest" description="Disordered" evidence="8">
    <location>
        <begin position="508"/>
        <end position="535"/>
    </location>
</feature>
<feature type="compositionally biased region" description="Polar residues" evidence="8">
    <location>
        <begin position="508"/>
        <end position="519"/>
    </location>
</feature>
<feature type="active site" description="4-aspartylphosphate intermediate" evidence="4">
    <location>
        <position position="467"/>
    </location>
</feature>
<feature type="binding site" evidence="6">
    <location>
        <position position="467"/>
    </location>
    <ligand>
        <name>ATP</name>
        <dbReference type="ChEBI" id="CHEBI:30616"/>
    </ligand>
</feature>
<feature type="binding site" evidence="6">
    <location>
        <position position="467"/>
    </location>
    <ligand>
        <name>Mg(2+)</name>
        <dbReference type="ChEBI" id="CHEBI:18420"/>
    </ligand>
</feature>
<feature type="binding site" evidence="6">
    <location>
        <position position="468"/>
    </location>
    <ligand>
        <name>ATP</name>
        <dbReference type="ChEBI" id="CHEBI:30616"/>
    </ligand>
</feature>
<feature type="binding site" evidence="4">
    <location>
        <position position="469"/>
    </location>
    <ligand>
        <name>ATP</name>
        <dbReference type="ChEBI" id="CHEBI:30616"/>
    </ligand>
</feature>
<feature type="binding site" evidence="6">
    <location>
        <position position="469"/>
    </location>
    <ligand>
        <name>Mg(2+)</name>
        <dbReference type="ChEBI" id="CHEBI:18420"/>
    </ligand>
</feature>
<feature type="binding site" evidence="2">
    <location>
        <position position="590"/>
    </location>
    <ligand>
        <name>ATP</name>
        <dbReference type="ChEBI" id="CHEBI:30616"/>
    </ligand>
</feature>
<feature type="binding site" evidence="6">
    <location>
        <position position="632"/>
    </location>
    <ligand>
        <name>ATP</name>
        <dbReference type="ChEBI" id="CHEBI:30616"/>
    </ligand>
</feature>
<feature type="binding site" evidence="4">
    <location>
        <position position="637"/>
    </location>
    <ligand>
        <name>ATP</name>
        <dbReference type="ChEBI" id="CHEBI:30616"/>
    </ligand>
</feature>
<feature type="binding site" evidence="2">
    <location>
        <position position="656"/>
    </location>
    <ligand>
        <name>ATP</name>
        <dbReference type="ChEBI" id="CHEBI:30616"/>
    </ligand>
</feature>
<feature type="binding site" evidence="2">
    <location>
        <position position="685"/>
    </location>
    <ligand>
        <name>ATP</name>
        <dbReference type="ChEBI" id="CHEBI:30616"/>
    </ligand>
</feature>
<feature type="binding site" evidence="3">
    <location>
        <position position="686"/>
    </location>
    <ligand>
        <name>ATP</name>
        <dbReference type="ChEBI" id="CHEBI:30616"/>
    </ligand>
</feature>
<feature type="binding site" evidence="2">
    <location>
        <position position="765"/>
    </location>
    <ligand>
        <name>ATP</name>
        <dbReference type="ChEBI" id="CHEBI:30616"/>
    </ligand>
</feature>
<feature type="binding site" evidence="2">
    <location>
        <position position="766"/>
    </location>
    <ligand>
        <name>ATP</name>
        <dbReference type="ChEBI" id="CHEBI:30616"/>
    </ligand>
</feature>
<feature type="binding site" evidence="2">
    <location>
        <position position="767"/>
    </location>
    <ligand>
        <name>ATP</name>
        <dbReference type="ChEBI" id="CHEBI:30616"/>
    </ligand>
</feature>
<feature type="binding site" evidence="2">
    <location>
        <position position="847"/>
    </location>
    <ligand>
        <name>ATP</name>
        <dbReference type="ChEBI" id="CHEBI:30616"/>
    </ligand>
</feature>
<feature type="binding site" evidence="2">
    <location>
        <position position="853"/>
    </location>
    <ligand>
        <name>ATP</name>
        <dbReference type="ChEBI" id="CHEBI:30616"/>
    </ligand>
</feature>
<feature type="binding site" evidence="6">
    <location>
        <position position="873"/>
    </location>
    <ligand>
        <name>Mg(2+)</name>
        <dbReference type="ChEBI" id="CHEBI:18420"/>
    </ligand>
</feature>
<feature type="binding site" evidence="6">
    <location>
        <position position="876"/>
    </location>
    <ligand>
        <name>ATP</name>
        <dbReference type="ChEBI" id="CHEBI:30616"/>
    </ligand>
</feature>
<feature type="binding site" evidence="2">
    <location>
        <position position="877"/>
    </location>
    <ligand>
        <name>ATP</name>
        <dbReference type="ChEBI" id="CHEBI:30616"/>
    </ligand>
</feature>
<feature type="binding site" evidence="5">
    <location>
        <position position="877"/>
    </location>
    <ligand>
        <name>Mg(2+)</name>
        <dbReference type="ChEBI" id="CHEBI:18420"/>
    </ligand>
</feature>
<feature type="splice variant" id="VSP_035908" description="In isoform 2." evidence="9">
    <location>
        <begin position="1091"/>
        <end position="1101"/>
    </location>
</feature>
<feature type="sequence conflict" description="In Ref. 1; AAH79626." evidence="10" ref="1">
    <original>N</original>
    <variation>K</variation>
    <location>
        <position position="366"/>
    </location>
</feature>
<feature type="sequence conflict" description="In Ref. 1; AAH79626." evidence="10" ref="1">
    <original>V</original>
    <variation>I</variation>
    <location>
        <position position="605"/>
    </location>
</feature>
<protein>
    <recommendedName>
        <fullName>Probable phospholipid-transporting ATPase IIB</fullName>
        <ecNumber>7.6.2.1</ecNumber>
    </recommendedName>
    <alternativeName>
        <fullName>ATPase class II type 9B</fullName>
    </alternativeName>
</protein>
<proteinExistence type="evidence at protein level"/>